<accession>Q9PR28</accession>
<protein>
    <recommendedName>
        <fullName evidence="1">Uracil phosphoribosyltransferase</fullName>
        <ecNumber evidence="1">2.4.2.9</ecNumber>
    </recommendedName>
    <alternativeName>
        <fullName evidence="1">UMP pyrophosphorylase</fullName>
    </alternativeName>
    <alternativeName>
        <fullName evidence="1">UPRTase</fullName>
    </alternativeName>
</protein>
<dbReference type="EC" id="2.4.2.9" evidence="1"/>
<dbReference type="EMBL" id="AF222894">
    <property type="protein sequence ID" value="AAF30522.1"/>
    <property type="molecule type" value="Genomic_DNA"/>
</dbReference>
<dbReference type="RefSeq" id="WP_006688866.1">
    <property type="nucleotide sequence ID" value="NC_002162.1"/>
</dbReference>
<dbReference type="SMR" id="Q9PR28"/>
<dbReference type="STRING" id="273119.UU116"/>
<dbReference type="EnsemblBacteria" id="AAF30522">
    <property type="protein sequence ID" value="AAF30522"/>
    <property type="gene ID" value="UU116"/>
</dbReference>
<dbReference type="GeneID" id="29672761"/>
<dbReference type="KEGG" id="uur:UU116"/>
<dbReference type="eggNOG" id="COG0035">
    <property type="taxonomic scope" value="Bacteria"/>
</dbReference>
<dbReference type="HOGENOM" id="CLU_067096_2_2_14"/>
<dbReference type="OrthoDB" id="9781675at2"/>
<dbReference type="UniPathway" id="UPA00574">
    <property type="reaction ID" value="UER00636"/>
</dbReference>
<dbReference type="Proteomes" id="UP000000423">
    <property type="component" value="Chromosome"/>
</dbReference>
<dbReference type="GO" id="GO:0005525">
    <property type="term" value="F:GTP binding"/>
    <property type="evidence" value="ECO:0007669"/>
    <property type="project" value="UniProtKB-KW"/>
</dbReference>
<dbReference type="GO" id="GO:0000287">
    <property type="term" value="F:magnesium ion binding"/>
    <property type="evidence" value="ECO:0007669"/>
    <property type="project" value="UniProtKB-UniRule"/>
</dbReference>
<dbReference type="GO" id="GO:0004845">
    <property type="term" value="F:uracil phosphoribosyltransferase activity"/>
    <property type="evidence" value="ECO:0007669"/>
    <property type="project" value="UniProtKB-UniRule"/>
</dbReference>
<dbReference type="GO" id="GO:0044206">
    <property type="term" value="P:UMP salvage"/>
    <property type="evidence" value="ECO:0007669"/>
    <property type="project" value="UniProtKB-UniRule"/>
</dbReference>
<dbReference type="GO" id="GO:0006223">
    <property type="term" value="P:uracil salvage"/>
    <property type="evidence" value="ECO:0007669"/>
    <property type="project" value="InterPro"/>
</dbReference>
<dbReference type="CDD" id="cd06223">
    <property type="entry name" value="PRTases_typeI"/>
    <property type="match status" value="1"/>
</dbReference>
<dbReference type="FunFam" id="3.40.50.2020:FF:000003">
    <property type="entry name" value="Uracil phosphoribosyltransferase"/>
    <property type="match status" value="1"/>
</dbReference>
<dbReference type="Gene3D" id="3.40.50.2020">
    <property type="match status" value="1"/>
</dbReference>
<dbReference type="HAMAP" id="MF_01218_B">
    <property type="entry name" value="Upp_B"/>
    <property type="match status" value="1"/>
</dbReference>
<dbReference type="InterPro" id="IPR000836">
    <property type="entry name" value="PRibTrfase_dom"/>
</dbReference>
<dbReference type="InterPro" id="IPR029057">
    <property type="entry name" value="PRTase-like"/>
</dbReference>
<dbReference type="InterPro" id="IPR034332">
    <property type="entry name" value="Upp_B"/>
</dbReference>
<dbReference type="InterPro" id="IPR050054">
    <property type="entry name" value="UPRTase/APRTase"/>
</dbReference>
<dbReference type="InterPro" id="IPR005765">
    <property type="entry name" value="Ura_phspho_trans"/>
</dbReference>
<dbReference type="NCBIfam" id="NF001097">
    <property type="entry name" value="PRK00129.1"/>
    <property type="match status" value="1"/>
</dbReference>
<dbReference type="NCBIfam" id="TIGR01091">
    <property type="entry name" value="upp"/>
    <property type="match status" value="1"/>
</dbReference>
<dbReference type="PANTHER" id="PTHR32315">
    <property type="entry name" value="ADENINE PHOSPHORIBOSYLTRANSFERASE"/>
    <property type="match status" value="1"/>
</dbReference>
<dbReference type="PANTHER" id="PTHR32315:SF4">
    <property type="entry name" value="URACIL PHOSPHORIBOSYLTRANSFERASE, CHLOROPLASTIC"/>
    <property type="match status" value="1"/>
</dbReference>
<dbReference type="Pfam" id="PF14681">
    <property type="entry name" value="UPRTase"/>
    <property type="match status" value="1"/>
</dbReference>
<dbReference type="SUPFAM" id="SSF53271">
    <property type="entry name" value="PRTase-like"/>
    <property type="match status" value="1"/>
</dbReference>
<name>UPP_UREPA</name>
<evidence type="ECO:0000255" key="1">
    <source>
        <dbReference type="HAMAP-Rule" id="MF_01218"/>
    </source>
</evidence>
<keyword id="KW-0021">Allosteric enzyme</keyword>
<keyword id="KW-0328">Glycosyltransferase</keyword>
<keyword id="KW-0342">GTP-binding</keyword>
<keyword id="KW-0460">Magnesium</keyword>
<keyword id="KW-0547">Nucleotide-binding</keyword>
<keyword id="KW-1185">Reference proteome</keyword>
<keyword id="KW-0808">Transferase</keyword>
<feature type="chain" id="PRO_0000120908" description="Uracil phosphoribosyltransferase">
    <location>
        <begin position="1"/>
        <end position="207"/>
    </location>
</feature>
<feature type="binding site" evidence="1">
    <location>
        <position position="77"/>
    </location>
    <ligand>
        <name>5-phospho-alpha-D-ribose 1-diphosphate</name>
        <dbReference type="ChEBI" id="CHEBI:58017"/>
    </ligand>
</feature>
<feature type="binding site" evidence="1">
    <location>
        <position position="102"/>
    </location>
    <ligand>
        <name>5-phospho-alpha-D-ribose 1-diphosphate</name>
        <dbReference type="ChEBI" id="CHEBI:58017"/>
    </ligand>
</feature>
<feature type="binding site" evidence="1">
    <location>
        <begin position="129"/>
        <end position="137"/>
    </location>
    <ligand>
        <name>5-phospho-alpha-D-ribose 1-diphosphate</name>
        <dbReference type="ChEBI" id="CHEBI:58017"/>
    </ligand>
</feature>
<feature type="binding site" evidence="1">
    <location>
        <position position="192"/>
    </location>
    <ligand>
        <name>uracil</name>
        <dbReference type="ChEBI" id="CHEBI:17568"/>
    </ligand>
</feature>
<feature type="binding site" evidence="1">
    <location>
        <begin position="197"/>
        <end position="199"/>
    </location>
    <ligand>
        <name>uracil</name>
        <dbReference type="ChEBI" id="CHEBI:17568"/>
    </ligand>
</feature>
<feature type="binding site" evidence="1">
    <location>
        <position position="198"/>
    </location>
    <ligand>
        <name>5-phospho-alpha-D-ribose 1-diphosphate</name>
        <dbReference type="ChEBI" id="CHEBI:58017"/>
    </ligand>
</feature>
<comment type="function">
    <text evidence="1">Catalyzes the conversion of uracil and 5-phospho-alpha-D-ribose 1-diphosphate (PRPP) to UMP and diphosphate.</text>
</comment>
<comment type="catalytic activity">
    <reaction evidence="1">
        <text>UMP + diphosphate = 5-phospho-alpha-D-ribose 1-diphosphate + uracil</text>
        <dbReference type="Rhea" id="RHEA:13017"/>
        <dbReference type="ChEBI" id="CHEBI:17568"/>
        <dbReference type="ChEBI" id="CHEBI:33019"/>
        <dbReference type="ChEBI" id="CHEBI:57865"/>
        <dbReference type="ChEBI" id="CHEBI:58017"/>
        <dbReference type="EC" id="2.4.2.9"/>
    </reaction>
</comment>
<comment type="cofactor">
    <cofactor evidence="1">
        <name>Mg(2+)</name>
        <dbReference type="ChEBI" id="CHEBI:18420"/>
    </cofactor>
    <text evidence="1">Binds 1 Mg(2+) ion per subunit. The magnesium is bound as Mg-PRPP.</text>
</comment>
<comment type="activity regulation">
    <text evidence="1">Allosterically activated by GTP.</text>
</comment>
<comment type="pathway">
    <text evidence="1">Pyrimidine metabolism; UMP biosynthesis via salvage pathway; UMP from uracil: step 1/1.</text>
</comment>
<comment type="similarity">
    <text evidence="1">Belongs to the UPRTase family.</text>
</comment>
<proteinExistence type="inferred from homology"/>
<reference key="1">
    <citation type="journal article" date="2000" name="Nature">
        <title>The complete sequence of the mucosal pathogen Ureaplasma urealyticum.</title>
        <authorList>
            <person name="Glass J.I."/>
            <person name="Lefkowitz E.J."/>
            <person name="Glass J.S."/>
            <person name="Heiner C.R."/>
            <person name="Chen E.Y."/>
            <person name="Cassell G.H."/>
        </authorList>
    </citation>
    <scope>NUCLEOTIDE SEQUENCE [LARGE SCALE GENOMIC DNA]</scope>
    <source>
        <strain>ATCC 700970</strain>
    </source>
</reference>
<sequence>MHKIINHPLIKDKLTRMRKVSTVSTVFRTNLEELTQLMVYEATKDLELNEIEIETPVVKVAKGYKLKNKICLIPILRAGIGMVDGVKSLIPTATIGHIGLYRNEQTLKPVEYFKKFPKNISESDVIILDPMLATGGSVVEAVNIIKKYNPKSIKFVCIVAAPEGLKYVQEVHPEVDVYIAALDDKLNENGYITPGLGDAGDRIFGTK</sequence>
<gene>
    <name evidence="1" type="primary">upp</name>
    <name type="ordered locus">UU116</name>
</gene>
<organism>
    <name type="scientific">Ureaplasma parvum serovar 3 (strain ATCC 700970)</name>
    <dbReference type="NCBI Taxonomy" id="273119"/>
    <lineage>
        <taxon>Bacteria</taxon>
        <taxon>Bacillati</taxon>
        <taxon>Mycoplasmatota</taxon>
        <taxon>Mycoplasmoidales</taxon>
        <taxon>Mycoplasmoidaceae</taxon>
        <taxon>Ureaplasma</taxon>
    </lineage>
</organism>